<dbReference type="EC" id="2.7.1.11" evidence="1"/>
<dbReference type="EMBL" id="AE008691">
    <property type="protein sequence ID" value="AAM25008.1"/>
    <property type="molecule type" value="Genomic_DNA"/>
</dbReference>
<dbReference type="RefSeq" id="WP_011026004.1">
    <property type="nucleotide sequence ID" value="NZ_JANUCV010000001.1"/>
</dbReference>
<dbReference type="SMR" id="Q8R914"/>
<dbReference type="STRING" id="273068.TTE1816"/>
<dbReference type="KEGG" id="tte:TTE1816"/>
<dbReference type="eggNOG" id="COG0205">
    <property type="taxonomic scope" value="Bacteria"/>
</dbReference>
<dbReference type="HOGENOM" id="CLU_020655_0_1_9"/>
<dbReference type="OrthoDB" id="9802503at2"/>
<dbReference type="UniPathway" id="UPA00109">
    <property type="reaction ID" value="UER00182"/>
</dbReference>
<dbReference type="Proteomes" id="UP000000555">
    <property type="component" value="Chromosome"/>
</dbReference>
<dbReference type="GO" id="GO:0005945">
    <property type="term" value="C:6-phosphofructokinase complex"/>
    <property type="evidence" value="ECO:0007669"/>
    <property type="project" value="TreeGrafter"/>
</dbReference>
<dbReference type="GO" id="GO:0003872">
    <property type="term" value="F:6-phosphofructokinase activity"/>
    <property type="evidence" value="ECO:0007669"/>
    <property type="project" value="UniProtKB-UniRule"/>
</dbReference>
<dbReference type="GO" id="GO:0016208">
    <property type="term" value="F:AMP binding"/>
    <property type="evidence" value="ECO:0007669"/>
    <property type="project" value="TreeGrafter"/>
</dbReference>
<dbReference type="GO" id="GO:0005524">
    <property type="term" value="F:ATP binding"/>
    <property type="evidence" value="ECO:0007669"/>
    <property type="project" value="UniProtKB-KW"/>
</dbReference>
<dbReference type="GO" id="GO:0070095">
    <property type="term" value="F:fructose-6-phosphate binding"/>
    <property type="evidence" value="ECO:0007669"/>
    <property type="project" value="TreeGrafter"/>
</dbReference>
<dbReference type="GO" id="GO:0042802">
    <property type="term" value="F:identical protein binding"/>
    <property type="evidence" value="ECO:0007669"/>
    <property type="project" value="TreeGrafter"/>
</dbReference>
<dbReference type="GO" id="GO:0046872">
    <property type="term" value="F:metal ion binding"/>
    <property type="evidence" value="ECO:0007669"/>
    <property type="project" value="UniProtKB-KW"/>
</dbReference>
<dbReference type="GO" id="GO:0048029">
    <property type="term" value="F:monosaccharide binding"/>
    <property type="evidence" value="ECO:0007669"/>
    <property type="project" value="TreeGrafter"/>
</dbReference>
<dbReference type="GO" id="GO:0061621">
    <property type="term" value="P:canonical glycolysis"/>
    <property type="evidence" value="ECO:0007669"/>
    <property type="project" value="TreeGrafter"/>
</dbReference>
<dbReference type="GO" id="GO:0030388">
    <property type="term" value="P:fructose 1,6-bisphosphate metabolic process"/>
    <property type="evidence" value="ECO:0007669"/>
    <property type="project" value="TreeGrafter"/>
</dbReference>
<dbReference type="GO" id="GO:0006002">
    <property type="term" value="P:fructose 6-phosphate metabolic process"/>
    <property type="evidence" value="ECO:0007669"/>
    <property type="project" value="InterPro"/>
</dbReference>
<dbReference type="FunFam" id="3.40.50.450:FF:000001">
    <property type="entry name" value="ATP-dependent 6-phosphofructokinase"/>
    <property type="match status" value="1"/>
</dbReference>
<dbReference type="FunFam" id="3.40.50.460:FF:000002">
    <property type="entry name" value="ATP-dependent 6-phosphofructokinase"/>
    <property type="match status" value="1"/>
</dbReference>
<dbReference type="Gene3D" id="3.40.50.450">
    <property type="match status" value="1"/>
</dbReference>
<dbReference type="Gene3D" id="3.40.50.460">
    <property type="entry name" value="Phosphofructokinase domain"/>
    <property type="match status" value="1"/>
</dbReference>
<dbReference type="HAMAP" id="MF_00339">
    <property type="entry name" value="Phosphofructokinase_I_B1"/>
    <property type="match status" value="1"/>
</dbReference>
<dbReference type="InterPro" id="IPR022953">
    <property type="entry name" value="ATP_PFK"/>
</dbReference>
<dbReference type="InterPro" id="IPR012003">
    <property type="entry name" value="ATP_PFK_prok-type"/>
</dbReference>
<dbReference type="InterPro" id="IPR012828">
    <property type="entry name" value="PFKA_ATP_prok"/>
</dbReference>
<dbReference type="InterPro" id="IPR015912">
    <property type="entry name" value="Phosphofructokinase_CS"/>
</dbReference>
<dbReference type="InterPro" id="IPR000023">
    <property type="entry name" value="Phosphofructokinase_dom"/>
</dbReference>
<dbReference type="InterPro" id="IPR035966">
    <property type="entry name" value="PKF_sf"/>
</dbReference>
<dbReference type="NCBIfam" id="TIGR02482">
    <property type="entry name" value="PFKA_ATP"/>
    <property type="match status" value="1"/>
</dbReference>
<dbReference type="NCBIfam" id="NF002872">
    <property type="entry name" value="PRK03202.1"/>
    <property type="match status" value="1"/>
</dbReference>
<dbReference type="PANTHER" id="PTHR13697:SF4">
    <property type="entry name" value="ATP-DEPENDENT 6-PHOSPHOFRUCTOKINASE"/>
    <property type="match status" value="1"/>
</dbReference>
<dbReference type="PANTHER" id="PTHR13697">
    <property type="entry name" value="PHOSPHOFRUCTOKINASE"/>
    <property type="match status" value="1"/>
</dbReference>
<dbReference type="Pfam" id="PF00365">
    <property type="entry name" value="PFK"/>
    <property type="match status" value="1"/>
</dbReference>
<dbReference type="PIRSF" id="PIRSF000532">
    <property type="entry name" value="ATP_PFK_prok"/>
    <property type="match status" value="1"/>
</dbReference>
<dbReference type="PRINTS" id="PR00476">
    <property type="entry name" value="PHFRCTKINASE"/>
</dbReference>
<dbReference type="SUPFAM" id="SSF53784">
    <property type="entry name" value="Phosphofructokinase"/>
    <property type="match status" value="1"/>
</dbReference>
<dbReference type="PROSITE" id="PS00433">
    <property type="entry name" value="PHOSPHOFRUCTOKINASE"/>
    <property type="match status" value="1"/>
</dbReference>
<protein>
    <recommendedName>
        <fullName evidence="1">ATP-dependent 6-phosphofructokinase</fullName>
        <shortName evidence="1">ATP-PFK</shortName>
        <shortName evidence="1">Phosphofructokinase</shortName>
        <ecNumber evidence="1">2.7.1.11</ecNumber>
    </recommendedName>
    <alternativeName>
        <fullName evidence="1">Phosphohexokinase</fullName>
    </alternativeName>
</protein>
<feature type="chain" id="PRO_0000112003" description="ATP-dependent 6-phosphofructokinase">
    <location>
        <begin position="1"/>
        <end position="321"/>
    </location>
</feature>
<feature type="active site" description="Proton acceptor" evidence="1">
    <location>
        <position position="128"/>
    </location>
</feature>
<feature type="binding site" evidence="1">
    <location>
        <position position="11"/>
    </location>
    <ligand>
        <name>ATP</name>
        <dbReference type="ChEBI" id="CHEBI:30616"/>
    </ligand>
</feature>
<feature type="binding site" evidence="1">
    <location>
        <begin position="21"/>
        <end position="25"/>
    </location>
    <ligand>
        <name>ADP</name>
        <dbReference type="ChEBI" id="CHEBI:456216"/>
        <note>allosteric activator; ligand shared between dimeric partners</note>
    </ligand>
</feature>
<feature type="binding site" evidence="1">
    <location>
        <begin position="72"/>
        <end position="73"/>
    </location>
    <ligand>
        <name>ATP</name>
        <dbReference type="ChEBI" id="CHEBI:30616"/>
    </ligand>
</feature>
<feature type="binding site" evidence="1">
    <location>
        <begin position="102"/>
        <end position="105"/>
    </location>
    <ligand>
        <name>ATP</name>
        <dbReference type="ChEBI" id="CHEBI:30616"/>
    </ligand>
</feature>
<feature type="binding site" evidence="1">
    <location>
        <position position="103"/>
    </location>
    <ligand>
        <name>Mg(2+)</name>
        <dbReference type="ChEBI" id="CHEBI:18420"/>
        <note>catalytic</note>
    </ligand>
</feature>
<feature type="binding site" description="in other chain" evidence="1">
    <location>
        <begin position="126"/>
        <end position="128"/>
    </location>
    <ligand>
        <name>substrate</name>
        <note>ligand shared between dimeric partners</note>
    </ligand>
</feature>
<feature type="binding site" description="in other chain" evidence="1">
    <location>
        <position position="155"/>
    </location>
    <ligand>
        <name>ADP</name>
        <dbReference type="ChEBI" id="CHEBI:456216"/>
        <note>allosteric activator; ligand shared between dimeric partners</note>
    </ligand>
</feature>
<feature type="binding site" evidence="1">
    <location>
        <position position="163"/>
    </location>
    <ligand>
        <name>substrate</name>
        <note>ligand shared between dimeric partners</note>
    </ligand>
</feature>
<feature type="binding site" description="in other chain" evidence="1">
    <location>
        <begin position="170"/>
        <end position="172"/>
    </location>
    <ligand>
        <name>substrate</name>
        <note>ligand shared between dimeric partners</note>
    </ligand>
</feature>
<feature type="binding site" description="in other chain" evidence="1">
    <location>
        <begin position="186"/>
        <end position="188"/>
    </location>
    <ligand>
        <name>ADP</name>
        <dbReference type="ChEBI" id="CHEBI:456216"/>
        <note>allosteric activator; ligand shared between dimeric partners</note>
    </ligand>
</feature>
<feature type="binding site" description="in other chain" evidence="1">
    <location>
        <position position="212"/>
    </location>
    <ligand>
        <name>ADP</name>
        <dbReference type="ChEBI" id="CHEBI:456216"/>
        <note>allosteric activator; ligand shared between dimeric partners</note>
    </ligand>
</feature>
<feature type="binding site" description="in other chain" evidence="1">
    <location>
        <begin position="214"/>
        <end position="216"/>
    </location>
    <ligand>
        <name>ADP</name>
        <dbReference type="ChEBI" id="CHEBI:456216"/>
        <note>allosteric activator; ligand shared between dimeric partners</note>
    </ligand>
</feature>
<feature type="binding site" description="in other chain" evidence="1">
    <location>
        <position position="223"/>
    </location>
    <ligand>
        <name>substrate</name>
        <note>ligand shared between dimeric partners</note>
    </ligand>
</feature>
<feature type="binding site" evidence="1">
    <location>
        <position position="245"/>
    </location>
    <ligand>
        <name>substrate</name>
        <note>ligand shared between dimeric partners</note>
    </ligand>
</feature>
<feature type="binding site" description="in other chain" evidence="1">
    <location>
        <begin position="251"/>
        <end position="254"/>
    </location>
    <ligand>
        <name>substrate</name>
        <note>ligand shared between dimeric partners</note>
    </ligand>
</feature>
<keyword id="KW-0021">Allosteric enzyme</keyword>
<keyword id="KW-0067">ATP-binding</keyword>
<keyword id="KW-0963">Cytoplasm</keyword>
<keyword id="KW-0324">Glycolysis</keyword>
<keyword id="KW-0418">Kinase</keyword>
<keyword id="KW-0460">Magnesium</keyword>
<keyword id="KW-0479">Metal-binding</keyword>
<keyword id="KW-0547">Nucleotide-binding</keyword>
<keyword id="KW-1185">Reference proteome</keyword>
<keyword id="KW-0808">Transferase</keyword>
<reference key="1">
    <citation type="journal article" date="2002" name="Genome Res.">
        <title>A complete sequence of the T. tengcongensis genome.</title>
        <authorList>
            <person name="Bao Q."/>
            <person name="Tian Y."/>
            <person name="Li W."/>
            <person name="Xu Z."/>
            <person name="Xuan Z."/>
            <person name="Hu S."/>
            <person name="Dong W."/>
            <person name="Yang J."/>
            <person name="Chen Y."/>
            <person name="Xue Y."/>
            <person name="Xu Y."/>
            <person name="Lai X."/>
            <person name="Huang L."/>
            <person name="Dong X."/>
            <person name="Ma Y."/>
            <person name="Ling L."/>
            <person name="Tan H."/>
            <person name="Chen R."/>
            <person name="Wang J."/>
            <person name="Yu J."/>
            <person name="Yang H."/>
        </authorList>
    </citation>
    <scope>NUCLEOTIDE SEQUENCE [LARGE SCALE GENOMIC DNA]</scope>
    <source>
        <strain>DSM 15242 / JCM 11007 / NBRC 100824 / MB4</strain>
    </source>
</reference>
<comment type="function">
    <text evidence="1">Catalyzes the phosphorylation of D-fructose 6-phosphate to fructose 1,6-bisphosphate by ATP, the first committing step of glycolysis.</text>
</comment>
<comment type="catalytic activity">
    <reaction evidence="1">
        <text>beta-D-fructose 6-phosphate + ATP = beta-D-fructose 1,6-bisphosphate + ADP + H(+)</text>
        <dbReference type="Rhea" id="RHEA:16109"/>
        <dbReference type="ChEBI" id="CHEBI:15378"/>
        <dbReference type="ChEBI" id="CHEBI:30616"/>
        <dbReference type="ChEBI" id="CHEBI:32966"/>
        <dbReference type="ChEBI" id="CHEBI:57634"/>
        <dbReference type="ChEBI" id="CHEBI:456216"/>
        <dbReference type="EC" id="2.7.1.11"/>
    </reaction>
</comment>
<comment type="cofactor">
    <cofactor evidence="1">
        <name>Mg(2+)</name>
        <dbReference type="ChEBI" id="CHEBI:18420"/>
    </cofactor>
</comment>
<comment type="activity regulation">
    <text evidence="1">Allosterically activated by ADP and other diphosphonucleosides, and allosterically inhibited by phosphoenolpyruvate.</text>
</comment>
<comment type="pathway">
    <text evidence="1">Carbohydrate degradation; glycolysis; D-glyceraldehyde 3-phosphate and glycerone phosphate from D-glucose: step 3/4.</text>
</comment>
<comment type="subunit">
    <text evidence="1">Homotetramer.</text>
</comment>
<comment type="subcellular location">
    <subcellularLocation>
        <location evidence="1">Cytoplasm</location>
    </subcellularLocation>
</comment>
<comment type="similarity">
    <text evidence="1">Belongs to the phosphofructokinase type A (PFKA) family. ATP-dependent PFK group I subfamily. Prokaryotic clade 'B1' sub-subfamily.</text>
</comment>
<organism>
    <name type="scientific">Caldanaerobacter subterraneus subsp. tengcongensis (strain DSM 15242 / JCM 11007 / NBRC 100824 / MB4)</name>
    <name type="common">Thermoanaerobacter tengcongensis</name>
    <dbReference type="NCBI Taxonomy" id="273068"/>
    <lineage>
        <taxon>Bacteria</taxon>
        <taxon>Bacillati</taxon>
        <taxon>Bacillota</taxon>
        <taxon>Clostridia</taxon>
        <taxon>Thermoanaerobacterales</taxon>
        <taxon>Thermoanaerobacteraceae</taxon>
        <taxon>Caldanaerobacter</taxon>
    </lineage>
</organism>
<name>PFKA_CALS4</name>
<sequence>MKTIGILTSGGDAPGMNAAIRAVVRTGIYYGLKVKGIMRGFAGLVEDEVIDLGLSSVGDIIQKGGTILRTARCEEFKQKEVRKKAYETLQKHGIEGLVVIGGDGSFRGAQLLSEEWNVNTICIPGTIDNDIPCTDYTIGFDTACNTVIDAINKIRDTATSHERANIIEVMGRNSGYIALYAGVAGGAEMIILPEVEWSIDELCDKITYGIKRGKLHHIIVLAEGVMSAPELAKMIKERLPKLDLRYTILGHIQRGGAPTVMDRVLASQMGARAVELLLENKTKRVISIRNNQIVDDDIDEALSMKKEFNRKLYELSKILSI</sequence>
<accession>Q8R914</accession>
<proteinExistence type="inferred from homology"/>
<gene>
    <name evidence="1" type="primary">pfkA</name>
    <name type="ordered locus">TTE1816</name>
</gene>
<evidence type="ECO:0000255" key="1">
    <source>
        <dbReference type="HAMAP-Rule" id="MF_00339"/>
    </source>
</evidence>